<keyword id="KW-0030">Aminoacyl-tRNA synthetase</keyword>
<keyword id="KW-0067">ATP-binding</keyword>
<keyword id="KW-0963">Cytoplasm</keyword>
<keyword id="KW-0436">Ligase</keyword>
<keyword id="KW-0547">Nucleotide-binding</keyword>
<keyword id="KW-0648">Protein biosynthesis</keyword>
<keyword id="KW-1185">Reference proteome</keyword>
<sequence length="435" mass="48013">MLDIQLLRKDIDAVAQRLATRGFQLDVALFQALEAERKQLQTQTEDLQARRNSLSKQIGMLKGKGEDASGPMAEVAGIGDTLKASAQRLAEIQDQISDAMLSIPNLPHESVPTGKDETENVEVRRVGTPRTFDFEIKDHVDVGARLGLDFETATKVTGSRFAFLRGGVARMHRALVQLMVDTHTLEHGYTEMYVPYIVNAASMRGTGQLPKFEDDLFKVPRKVGGEDGQDAIENFYLIPTAEVPLTNVVRDAIVAAEKLPLRFVAHTPCFRSEAGSYGKDTRGMIRQHQFDKVEMVQVVPSEQSMDALEQMTGHAETILKKLELPFRTVVLCTGDMGFGSTKTYDIEVWIPAQNTYREISSCSSMGDFQARRMQARMRAGQGKPELVHTLNGSGLAVGRTLVAILENYQNADGSVTVPKALQPYMGGITRLEPEA</sequence>
<organism>
    <name type="scientific">Cupriavidus metallidurans (strain ATCC 43123 / DSM 2839 / NBRC 102507 / CH34)</name>
    <name type="common">Ralstonia metallidurans</name>
    <dbReference type="NCBI Taxonomy" id="266264"/>
    <lineage>
        <taxon>Bacteria</taxon>
        <taxon>Pseudomonadati</taxon>
        <taxon>Pseudomonadota</taxon>
        <taxon>Betaproteobacteria</taxon>
        <taxon>Burkholderiales</taxon>
        <taxon>Burkholderiaceae</taxon>
        <taxon>Cupriavidus</taxon>
    </lineage>
</organism>
<evidence type="ECO:0000255" key="1">
    <source>
        <dbReference type="HAMAP-Rule" id="MF_00176"/>
    </source>
</evidence>
<gene>
    <name evidence="1" type="primary">serS</name>
    <name type="ordered locus">Rmet_0695</name>
</gene>
<proteinExistence type="inferred from homology"/>
<protein>
    <recommendedName>
        <fullName evidence="1">Serine--tRNA ligase</fullName>
        <ecNumber evidence="1">6.1.1.11</ecNumber>
    </recommendedName>
    <alternativeName>
        <fullName evidence="1">Seryl-tRNA synthetase</fullName>
        <shortName evidence="1">SerRS</shortName>
    </alternativeName>
    <alternativeName>
        <fullName evidence="1">Seryl-tRNA(Ser/Sec) synthetase</fullName>
    </alternativeName>
</protein>
<accession>Q1LQJ5</accession>
<dbReference type="EC" id="6.1.1.11" evidence="1"/>
<dbReference type="EMBL" id="CP000352">
    <property type="protein sequence ID" value="ABF07581.1"/>
    <property type="molecule type" value="Genomic_DNA"/>
</dbReference>
<dbReference type="RefSeq" id="WP_011515546.1">
    <property type="nucleotide sequence ID" value="NC_007973.1"/>
</dbReference>
<dbReference type="SMR" id="Q1LQJ5"/>
<dbReference type="STRING" id="266264.Rmet_0695"/>
<dbReference type="KEGG" id="rme:Rmet_0695"/>
<dbReference type="eggNOG" id="COG0172">
    <property type="taxonomic scope" value="Bacteria"/>
</dbReference>
<dbReference type="HOGENOM" id="CLU_023797_1_1_4"/>
<dbReference type="UniPathway" id="UPA00906">
    <property type="reaction ID" value="UER00895"/>
</dbReference>
<dbReference type="Proteomes" id="UP000002429">
    <property type="component" value="Chromosome"/>
</dbReference>
<dbReference type="GO" id="GO:0005737">
    <property type="term" value="C:cytoplasm"/>
    <property type="evidence" value="ECO:0007669"/>
    <property type="project" value="UniProtKB-SubCell"/>
</dbReference>
<dbReference type="GO" id="GO:0005524">
    <property type="term" value="F:ATP binding"/>
    <property type="evidence" value="ECO:0007669"/>
    <property type="project" value="UniProtKB-UniRule"/>
</dbReference>
<dbReference type="GO" id="GO:0004828">
    <property type="term" value="F:serine-tRNA ligase activity"/>
    <property type="evidence" value="ECO:0007669"/>
    <property type="project" value="UniProtKB-UniRule"/>
</dbReference>
<dbReference type="GO" id="GO:0016260">
    <property type="term" value="P:selenocysteine biosynthetic process"/>
    <property type="evidence" value="ECO:0007669"/>
    <property type="project" value="UniProtKB-UniRule"/>
</dbReference>
<dbReference type="GO" id="GO:0006434">
    <property type="term" value="P:seryl-tRNA aminoacylation"/>
    <property type="evidence" value="ECO:0007669"/>
    <property type="project" value="UniProtKB-UniRule"/>
</dbReference>
<dbReference type="CDD" id="cd00770">
    <property type="entry name" value="SerRS_core"/>
    <property type="match status" value="1"/>
</dbReference>
<dbReference type="Gene3D" id="3.30.930.10">
    <property type="entry name" value="Bira Bifunctional Protein, Domain 2"/>
    <property type="match status" value="1"/>
</dbReference>
<dbReference type="Gene3D" id="1.10.287.40">
    <property type="entry name" value="Serine-tRNA synthetase, tRNA binding domain"/>
    <property type="match status" value="1"/>
</dbReference>
<dbReference type="HAMAP" id="MF_00176">
    <property type="entry name" value="Ser_tRNA_synth_type1"/>
    <property type="match status" value="1"/>
</dbReference>
<dbReference type="InterPro" id="IPR002314">
    <property type="entry name" value="aa-tRNA-synt_IIb"/>
</dbReference>
<dbReference type="InterPro" id="IPR006195">
    <property type="entry name" value="aa-tRNA-synth_II"/>
</dbReference>
<dbReference type="InterPro" id="IPR045864">
    <property type="entry name" value="aa-tRNA-synth_II/BPL/LPL"/>
</dbReference>
<dbReference type="InterPro" id="IPR002317">
    <property type="entry name" value="Ser-tRNA-ligase_type_1"/>
</dbReference>
<dbReference type="InterPro" id="IPR015866">
    <property type="entry name" value="Ser-tRNA-synth_1_N"/>
</dbReference>
<dbReference type="InterPro" id="IPR042103">
    <property type="entry name" value="SerRS_1_N_sf"/>
</dbReference>
<dbReference type="InterPro" id="IPR033729">
    <property type="entry name" value="SerRS_core"/>
</dbReference>
<dbReference type="InterPro" id="IPR010978">
    <property type="entry name" value="tRNA-bd_arm"/>
</dbReference>
<dbReference type="NCBIfam" id="TIGR00414">
    <property type="entry name" value="serS"/>
    <property type="match status" value="1"/>
</dbReference>
<dbReference type="PANTHER" id="PTHR43697:SF1">
    <property type="entry name" value="SERINE--TRNA LIGASE"/>
    <property type="match status" value="1"/>
</dbReference>
<dbReference type="PANTHER" id="PTHR43697">
    <property type="entry name" value="SERYL-TRNA SYNTHETASE"/>
    <property type="match status" value="1"/>
</dbReference>
<dbReference type="Pfam" id="PF02403">
    <property type="entry name" value="Seryl_tRNA_N"/>
    <property type="match status" value="1"/>
</dbReference>
<dbReference type="Pfam" id="PF00587">
    <property type="entry name" value="tRNA-synt_2b"/>
    <property type="match status" value="1"/>
</dbReference>
<dbReference type="PIRSF" id="PIRSF001529">
    <property type="entry name" value="Ser-tRNA-synth_IIa"/>
    <property type="match status" value="1"/>
</dbReference>
<dbReference type="PRINTS" id="PR00981">
    <property type="entry name" value="TRNASYNTHSER"/>
</dbReference>
<dbReference type="SUPFAM" id="SSF55681">
    <property type="entry name" value="Class II aaRS and biotin synthetases"/>
    <property type="match status" value="1"/>
</dbReference>
<dbReference type="SUPFAM" id="SSF46589">
    <property type="entry name" value="tRNA-binding arm"/>
    <property type="match status" value="1"/>
</dbReference>
<dbReference type="PROSITE" id="PS50862">
    <property type="entry name" value="AA_TRNA_LIGASE_II"/>
    <property type="match status" value="1"/>
</dbReference>
<comment type="function">
    <text evidence="1">Catalyzes the attachment of serine to tRNA(Ser). Is also able to aminoacylate tRNA(Sec) with serine, to form the misacylated tRNA L-seryl-tRNA(Sec), which will be further converted into selenocysteinyl-tRNA(Sec).</text>
</comment>
<comment type="catalytic activity">
    <reaction evidence="1">
        <text>tRNA(Ser) + L-serine + ATP = L-seryl-tRNA(Ser) + AMP + diphosphate + H(+)</text>
        <dbReference type="Rhea" id="RHEA:12292"/>
        <dbReference type="Rhea" id="RHEA-COMP:9669"/>
        <dbReference type="Rhea" id="RHEA-COMP:9703"/>
        <dbReference type="ChEBI" id="CHEBI:15378"/>
        <dbReference type="ChEBI" id="CHEBI:30616"/>
        <dbReference type="ChEBI" id="CHEBI:33019"/>
        <dbReference type="ChEBI" id="CHEBI:33384"/>
        <dbReference type="ChEBI" id="CHEBI:78442"/>
        <dbReference type="ChEBI" id="CHEBI:78533"/>
        <dbReference type="ChEBI" id="CHEBI:456215"/>
        <dbReference type="EC" id="6.1.1.11"/>
    </reaction>
</comment>
<comment type="catalytic activity">
    <reaction evidence="1">
        <text>tRNA(Sec) + L-serine + ATP = L-seryl-tRNA(Sec) + AMP + diphosphate + H(+)</text>
        <dbReference type="Rhea" id="RHEA:42580"/>
        <dbReference type="Rhea" id="RHEA-COMP:9742"/>
        <dbReference type="Rhea" id="RHEA-COMP:10128"/>
        <dbReference type="ChEBI" id="CHEBI:15378"/>
        <dbReference type="ChEBI" id="CHEBI:30616"/>
        <dbReference type="ChEBI" id="CHEBI:33019"/>
        <dbReference type="ChEBI" id="CHEBI:33384"/>
        <dbReference type="ChEBI" id="CHEBI:78442"/>
        <dbReference type="ChEBI" id="CHEBI:78533"/>
        <dbReference type="ChEBI" id="CHEBI:456215"/>
        <dbReference type="EC" id="6.1.1.11"/>
    </reaction>
</comment>
<comment type="pathway">
    <text evidence="1">Aminoacyl-tRNA biosynthesis; selenocysteinyl-tRNA(Sec) biosynthesis; L-seryl-tRNA(Sec) from L-serine and tRNA(Sec): step 1/1.</text>
</comment>
<comment type="subunit">
    <text evidence="1">Homodimer. The tRNA molecule binds across the dimer.</text>
</comment>
<comment type="subcellular location">
    <subcellularLocation>
        <location evidence="1">Cytoplasm</location>
    </subcellularLocation>
</comment>
<comment type="domain">
    <text evidence="1">Consists of two distinct domains, a catalytic core and a N-terminal extension that is involved in tRNA binding.</text>
</comment>
<comment type="similarity">
    <text evidence="1">Belongs to the class-II aminoacyl-tRNA synthetase family. Type-1 seryl-tRNA synthetase subfamily.</text>
</comment>
<name>SYS_CUPMC</name>
<reference key="1">
    <citation type="journal article" date="2010" name="PLoS ONE">
        <title>The complete genome sequence of Cupriavidus metallidurans strain CH34, a master survivalist in harsh and anthropogenic environments.</title>
        <authorList>
            <person name="Janssen P.J."/>
            <person name="Van Houdt R."/>
            <person name="Moors H."/>
            <person name="Monsieurs P."/>
            <person name="Morin N."/>
            <person name="Michaux A."/>
            <person name="Benotmane M.A."/>
            <person name="Leys N."/>
            <person name="Vallaeys T."/>
            <person name="Lapidus A."/>
            <person name="Monchy S."/>
            <person name="Medigue C."/>
            <person name="Taghavi S."/>
            <person name="McCorkle S."/>
            <person name="Dunn J."/>
            <person name="van der Lelie D."/>
            <person name="Mergeay M."/>
        </authorList>
    </citation>
    <scope>NUCLEOTIDE SEQUENCE [LARGE SCALE GENOMIC DNA]</scope>
    <source>
        <strain>ATCC 43123 / DSM 2839 / NBRC 102507 / CH34</strain>
    </source>
</reference>
<feature type="chain" id="PRO_1000019788" description="Serine--tRNA ligase">
    <location>
        <begin position="1"/>
        <end position="435"/>
    </location>
</feature>
<feature type="binding site" evidence="1">
    <location>
        <begin position="240"/>
        <end position="242"/>
    </location>
    <ligand>
        <name>L-serine</name>
        <dbReference type="ChEBI" id="CHEBI:33384"/>
    </ligand>
</feature>
<feature type="binding site" evidence="1">
    <location>
        <begin position="271"/>
        <end position="273"/>
    </location>
    <ligand>
        <name>ATP</name>
        <dbReference type="ChEBI" id="CHEBI:30616"/>
    </ligand>
</feature>
<feature type="binding site" evidence="1">
    <location>
        <position position="294"/>
    </location>
    <ligand>
        <name>L-serine</name>
        <dbReference type="ChEBI" id="CHEBI:33384"/>
    </ligand>
</feature>
<feature type="binding site" evidence="1">
    <location>
        <begin position="358"/>
        <end position="361"/>
    </location>
    <ligand>
        <name>ATP</name>
        <dbReference type="ChEBI" id="CHEBI:30616"/>
    </ligand>
</feature>
<feature type="binding site" evidence="1">
    <location>
        <position position="393"/>
    </location>
    <ligand>
        <name>L-serine</name>
        <dbReference type="ChEBI" id="CHEBI:33384"/>
    </ligand>
</feature>